<name>TRPC_CAMJD</name>
<feature type="chain" id="PRO_1000018469" description="Indole-3-glycerol phosphate synthase">
    <location>
        <begin position="1"/>
        <end position="258"/>
    </location>
</feature>
<accession>A7H4P0</accession>
<protein>
    <recommendedName>
        <fullName evidence="1">Indole-3-glycerol phosphate synthase</fullName>
        <shortName evidence="1">IGPS</shortName>
        <ecNumber evidence="1">4.1.1.48</ecNumber>
    </recommendedName>
</protein>
<keyword id="KW-0028">Amino-acid biosynthesis</keyword>
<keyword id="KW-0057">Aromatic amino acid biosynthesis</keyword>
<keyword id="KW-0210">Decarboxylase</keyword>
<keyword id="KW-0456">Lyase</keyword>
<keyword id="KW-0822">Tryptophan biosynthesis</keyword>
<organism>
    <name type="scientific">Campylobacter jejuni subsp. doylei (strain ATCC BAA-1458 / RM4099 / 269.97)</name>
    <dbReference type="NCBI Taxonomy" id="360109"/>
    <lineage>
        <taxon>Bacteria</taxon>
        <taxon>Pseudomonadati</taxon>
        <taxon>Campylobacterota</taxon>
        <taxon>Epsilonproteobacteria</taxon>
        <taxon>Campylobacterales</taxon>
        <taxon>Campylobacteraceae</taxon>
        <taxon>Campylobacter</taxon>
    </lineage>
</organism>
<reference key="1">
    <citation type="submission" date="2007-07" db="EMBL/GenBank/DDBJ databases">
        <title>Complete genome sequence of Campylobacter jejuni subsp doylei 269.97 isolated from human blood.</title>
        <authorList>
            <person name="Fouts D.E."/>
            <person name="Mongodin E.F."/>
            <person name="Puiu D."/>
            <person name="Sebastian Y."/>
            <person name="Miller W.G."/>
            <person name="Mandrell R.E."/>
            <person name="Lastovica A.J."/>
            <person name="Nelson K.E."/>
        </authorList>
    </citation>
    <scope>NUCLEOTIDE SEQUENCE [LARGE SCALE GENOMIC DNA]</scope>
    <source>
        <strain>ATCC BAA-1458 / RM4099 / 269.97</strain>
    </source>
</reference>
<dbReference type="EC" id="4.1.1.48" evidence="1"/>
<dbReference type="EMBL" id="CP000768">
    <property type="protein sequence ID" value="ABS43675.1"/>
    <property type="molecule type" value="Genomic_DNA"/>
</dbReference>
<dbReference type="SMR" id="A7H4P0"/>
<dbReference type="KEGG" id="cjd:JJD26997_1436"/>
<dbReference type="HOGENOM" id="CLU_034247_2_0_7"/>
<dbReference type="UniPathway" id="UPA00035">
    <property type="reaction ID" value="UER00043"/>
</dbReference>
<dbReference type="Proteomes" id="UP000002302">
    <property type="component" value="Chromosome"/>
</dbReference>
<dbReference type="GO" id="GO:0004425">
    <property type="term" value="F:indole-3-glycerol-phosphate synthase activity"/>
    <property type="evidence" value="ECO:0007669"/>
    <property type="project" value="UniProtKB-UniRule"/>
</dbReference>
<dbReference type="GO" id="GO:0004640">
    <property type="term" value="F:phosphoribosylanthranilate isomerase activity"/>
    <property type="evidence" value="ECO:0007669"/>
    <property type="project" value="TreeGrafter"/>
</dbReference>
<dbReference type="GO" id="GO:0000162">
    <property type="term" value="P:L-tryptophan biosynthetic process"/>
    <property type="evidence" value="ECO:0007669"/>
    <property type="project" value="UniProtKB-UniRule"/>
</dbReference>
<dbReference type="CDD" id="cd00331">
    <property type="entry name" value="IGPS"/>
    <property type="match status" value="1"/>
</dbReference>
<dbReference type="FunFam" id="3.20.20.70:FF:000024">
    <property type="entry name" value="Indole-3-glycerol phosphate synthase"/>
    <property type="match status" value="1"/>
</dbReference>
<dbReference type="Gene3D" id="3.20.20.70">
    <property type="entry name" value="Aldolase class I"/>
    <property type="match status" value="1"/>
</dbReference>
<dbReference type="HAMAP" id="MF_00134_A">
    <property type="entry name" value="IGPS_A"/>
    <property type="match status" value="1"/>
</dbReference>
<dbReference type="HAMAP" id="MF_00134_B">
    <property type="entry name" value="IGPS_B"/>
    <property type="match status" value="1"/>
</dbReference>
<dbReference type="InterPro" id="IPR013785">
    <property type="entry name" value="Aldolase_TIM"/>
</dbReference>
<dbReference type="InterPro" id="IPR045186">
    <property type="entry name" value="Indole-3-glycerol_P_synth"/>
</dbReference>
<dbReference type="InterPro" id="IPR013798">
    <property type="entry name" value="Indole-3-glycerol_P_synth_dom"/>
</dbReference>
<dbReference type="InterPro" id="IPR001468">
    <property type="entry name" value="Indole-3-GlycerolPSynthase_CS"/>
</dbReference>
<dbReference type="InterPro" id="IPR011060">
    <property type="entry name" value="RibuloseP-bd_barrel"/>
</dbReference>
<dbReference type="NCBIfam" id="NF001377">
    <property type="entry name" value="PRK00278.2-4"/>
    <property type="match status" value="1"/>
</dbReference>
<dbReference type="NCBIfam" id="NF001378">
    <property type="entry name" value="PRK00278.2-5"/>
    <property type="match status" value="1"/>
</dbReference>
<dbReference type="PANTHER" id="PTHR22854:SF2">
    <property type="entry name" value="INDOLE-3-GLYCEROL-PHOSPHATE SYNTHASE"/>
    <property type="match status" value="1"/>
</dbReference>
<dbReference type="PANTHER" id="PTHR22854">
    <property type="entry name" value="TRYPTOPHAN BIOSYNTHESIS PROTEIN"/>
    <property type="match status" value="1"/>
</dbReference>
<dbReference type="Pfam" id="PF00218">
    <property type="entry name" value="IGPS"/>
    <property type="match status" value="1"/>
</dbReference>
<dbReference type="SUPFAM" id="SSF51366">
    <property type="entry name" value="Ribulose-phoshate binding barrel"/>
    <property type="match status" value="1"/>
</dbReference>
<dbReference type="PROSITE" id="PS00614">
    <property type="entry name" value="IGPS"/>
    <property type="match status" value="1"/>
</dbReference>
<sequence length="258" mass="29600">MILDKIFEKTKEDLKERKLKLPYDMLGRSLASNPFFPKDVIKALKRVEKEVKIIAEVKKASPSKGVIREDFDPLSIALNYEKNKAAAISVLTEPHFFKGSLEYLSLIRRYTQIPLLRKDFIFDEYQILEALVYGADFVLLIAKMLSMKELKKLLEFARHLGLEALVEIHDKEDLSKAIFAGADIIGINHRNLEDFTMDMSLCEKLIPKIPNSKIIIAESGLENKEFLEYLQNLGVDAFLIGEYFMREEDEGKALKALL</sequence>
<proteinExistence type="inferred from homology"/>
<comment type="catalytic activity">
    <reaction evidence="1">
        <text>1-(2-carboxyphenylamino)-1-deoxy-D-ribulose 5-phosphate + H(+) = (1S,2R)-1-C-(indol-3-yl)glycerol 3-phosphate + CO2 + H2O</text>
        <dbReference type="Rhea" id="RHEA:23476"/>
        <dbReference type="ChEBI" id="CHEBI:15377"/>
        <dbReference type="ChEBI" id="CHEBI:15378"/>
        <dbReference type="ChEBI" id="CHEBI:16526"/>
        <dbReference type="ChEBI" id="CHEBI:58613"/>
        <dbReference type="ChEBI" id="CHEBI:58866"/>
        <dbReference type="EC" id="4.1.1.48"/>
    </reaction>
</comment>
<comment type="pathway">
    <text evidence="1">Amino-acid biosynthesis; L-tryptophan biosynthesis; L-tryptophan from chorismate: step 4/5.</text>
</comment>
<comment type="similarity">
    <text evidence="1">Belongs to the TrpC family.</text>
</comment>
<evidence type="ECO:0000255" key="1">
    <source>
        <dbReference type="HAMAP-Rule" id="MF_00134"/>
    </source>
</evidence>
<gene>
    <name evidence="1" type="primary">trpC</name>
    <name type="ordered locus">JJD26997_1436</name>
</gene>